<reference key="1">
    <citation type="journal article" date="2008" name="DNA Res.">
        <title>Complete genome sequence of Finegoldia magna, an anaerobic opportunistic pathogen.</title>
        <authorList>
            <person name="Goto T."/>
            <person name="Yamashita A."/>
            <person name="Hirakawa H."/>
            <person name="Matsutani M."/>
            <person name="Todo K."/>
            <person name="Ohshima K."/>
            <person name="Toh H."/>
            <person name="Miyamoto K."/>
            <person name="Kuhara S."/>
            <person name="Hattori M."/>
            <person name="Shimizu T."/>
            <person name="Akimoto S."/>
        </authorList>
    </citation>
    <scope>NUCLEOTIDE SEQUENCE [LARGE SCALE GENOMIC DNA]</scope>
    <source>
        <strain>ATCC 29328 / DSM 20472 / WAL 2508</strain>
    </source>
</reference>
<sequence>MKILLDTLGSDKGASELIEGAIMALEKKDFNLTIVGNEEENRNIVNKRFEEKIDFVNATETIENNESPTKAIRSKKDSSMRKCFDLLNEDYDGFLSTGSTGALLTGATLITKRLDNVSRPCLMVTVPSLKGEVVVLDVGANVDVTSDLLEQFAKMGYVYSKNILGKEDCKVGLLNIGVEEHKGDSLRLETYQKLSNYPYFKGNVEARDVLKGDFDVVVTDGFSGNILLKTIEGSVEFIKTLAKSKLSKLDEKSQQIIIPMIKSMSSGIDYNSVGSAPFLGTKKPVFKAHGSSNRNAIMSGILTLIKFIEEDVTDKLKKELTNE</sequence>
<evidence type="ECO:0000255" key="1">
    <source>
        <dbReference type="HAMAP-Rule" id="MF_00019"/>
    </source>
</evidence>
<accession>B0S1M8</accession>
<feature type="chain" id="PRO_1000089907" description="Phosphate acyltransferase">
    <location>
        <begin position="1"/>
        <end position="323"/>
    </location>
</feature>
<protein>
    <recommendedName>
        <fullName evidence="1">Phosphate acyltransferase</fullName>
        <ecNumber evidence="1">2.3.1.274</ecNumber>
    </recommendedName>
    <alternativeName>
        <fullName evidence="1">Acyl-ACP phosphotransacylase</fullName>
    </alternativeName>
    <alternativeName>
        <fullName evidence="1">Acyl-[acyl-carrier-protein]--phosphate acyltransferase</fullName>
    </alternativeName>
    <alternativeName>
        <fullName evidence="1">Phosphate-acyl-ACP acyltransferase</fullName>
    </alternativeName>
</protein>
<organism>
    <name type="scientific">Finegoldia magna (strain ATCC 29328 / DSM 20472 / WAL 2508)</name>
    <name type="common">Peptostreptococcus magnus</name>
    <dbReference type="NCBI Taxonomy" id="334413"/>
    <lineage>
        <taxon>Bacteria</taxon>
        <taxon>Bacillati</taxon>
        <taxon>Bacillota</taxon>
        <taxon>Tissierellia</taxon>
        <taxon>Tissierellales</taxon>
        <taxon>Peptoniphilaceae</taxon>
        <taxon>Finegoldia</taxon>
    </lineage>
</organism>
<keyword id="KW-0963">Cytoplasm</keyword>
<keyword id="KW-0444">Lipid biosynthesis</keyword>
<keyword id="KW-0443">Lipid metabolism</keyword>
<keyword id="KW-0594">Phospholipid biosynthesis</keyword>
<keyword id="KW-1208">Phospholipid metabolism</keyword>
<keyword id="KW-1185">Reference proteome</keyword>
<keyword id="KW-0808">Transferase</keyword>
<name>PLSX_FINM2</name>
<gene>
    <name evidence="1" type="primary">plsX</name>
    <name type="ordered locus">FMG_0850</name>
</gene>
<dbReference type="EC" id="2.3.1.274" evidence="1"/>
<dbReference type="EMBL" id="AP008971">
    <property type="protein sequence ID" value="BAG08268.1"/>
    <property type="molecule type" value="Genomic_DNA"/>
</dbReference>
<dbReference type="RefSeq" id="WP_012290665.1">
    <property type="nucleotide sequence ID" value="NC_010376.1"/>
</dbReference>
<dbReference type="SMR" id="B0S1M8"/>
<dbReference type="STRING" id="334413.FMG_0850"/>
<dbReference type="KEGG" id="fma:FMG_0850"/>
<dbReference type="eggNOG" id="COG0416">
    <property type="taxonomic scope" value="Bacteria"/>
</dbReference>
<dbReference type="HOGENOM" id="CLU_039379_1_1_9"/>
<dbReference type="UniPathway" id="UPA00085"/>
<dbReference type="Proteomes" id="UP000001319">
    <property type="component" value="Chromosome"/>
</dbReference>
<dbReference type="GO" id="GO:0005737">
    <property type="term" value="C:cytoplasm"/>
    <property type="evidence" value="ECO:0007669"/>
    <property type="project" value="UniProtKB-SubCell"/>
</dbReference>
<dbReference type="GO" id="GO:0043811">
    <property type="term" value="F:phosphate:acyl-[acyl carrier protein] acyltransferase activity"/>
    <property type="evidence" value="ECO:0007669"/>
    <property type="project" value="UniProtKB-UniRule"/>
</dbReference>
<dbReference type="GO" id="GO:0006633">
    <property type="term" value="P:fatty acid biosynthetic process"/>
    <property type="evidence" value="ECO:0007669"/>
    <property type="project" value="UniProtKB-UniRule"/>
</dbReference>
<dbReference type="GO" id="GO:0008654">
    <property type="term" value="P:phospholipid biosynthetic process"/>
    <property type="evidence" value="ECO:0007669"/>
    <property type="project" value="UniProtKB-KW"/>
</dbReference>
<dbReference type="Gene3D" id="3.40.718.10">
    <property type="entry name" value="Isopropylmalate Dehydrogenase"/>
    <property type="match status" value="1"/>
</dbReference>
<dbReference type="HAMAP" id="MF_00019">
    <property type="entry name" value="PlsX"/>
    <property type="match status" value="1"/>
</dbReference>
<dbReference type="InterPro" id="IPR003664">
    <property type="entry name" value="FA_synthesis"/>
</dbReference>
<dbReference type="InterPro" id="IPR012281">
    <property type="entry name" value="Phospholipid_synth_PlsX-like"/>
</dbReference>
<dbReference type="NCBIfam" id="TIGR00182">
    <property type="entry name" value="plsX"/>
    <property type="match status" value="1"/>
</dbReference>
<dbReference type="PANTHER" id="PTHR30100">
    <property type="entry name" value="FATTY ACID/PHOSPHOLIPID SYNTHESIS PROTEIN PLSX"/>
    <property type="match status" value="1"/>
</dbReference>
<dbReference type="PANTHER" id="PTHR30100:SF1">
    <property type="entry name" value="PHOSPHATE ACYLTRANSFERASE"/>
    <property type="match status" value="1"/>
</dbReference>
<dbReference type="Pfam" id="PF02504">
    <property type="entry name" value="FA_synthesis"/>
    <property type="match status" value="1"/>
</dbReference>
<dbReference type="PIRSF" id="PIRSF002465">
    <property type="entry name" value="Phsphlp_syn_PlsX"/>
    <property type="match status" value="1"/>
</dbReference>
<dbReference type="SUPFAM" id="SSF53659">
    <property type="entry name" value="Isocitrate/Isopropylmalate dehydrogenase-like"/>
    <property type="match status" value="1"/>
</dbReference>
<proteinExistence type="inferred from homology"/>
<comment type="function">
    <text evidence="1">Catalyzes the reversible formation of acyl-phosphate (acyl-PO(4)) from acyl-[acyl-carrier-protein] (acyl-ACP). This enzyme utilizes acyl-ACP as fatty acyl donor, but not acyl-CoA.</text>
</comment>
<comment type="catalytic activity">
    <reaction evidence="1">
        <text>a fatty acyl-[ACP] + phosphate = an acyl phosphate + holo-[ACP]</text>
        <dbReference type="Rhea" id="RHEA:42292"/>
        <dbReference type="Rhea" id="RHEA-COMP:9685"/>
        <dbReference type="Rhea" id="RHEA-COMP:14125"/>
        <dbReference type="ChEBI" id="CHEBI:43474"/>
        <dbReference type="ChEBI" id="CHEBI:59918"/>
        <dbReference type="ChEBI" id="CHEBI:64479"/>
        <dbReference type="ChEBI" id="CHEBI:138651"/>
        <dbReference type="EC" id="2.3.1.274"/>
    </reaction>
</comment>
<comment type="pathway">
    <text evidence="1">Lipid metabolism; phospholipid metabolism.</text>
</comment>
<comment type="subunit">
    <text evidence="1">Homodimer. Probably interacts with PlsY.</text>
</comment>
<comment type="subcellular location">
    <subcellularLocation>
        <location evidence="1">Cytoplasm</location>
    </subcellularLocation>
    <text evidence="1">Associated with the membrane possibly through PlsY.</text>
</comment>
<comment type="similarity">
    <text evidence="1">Belongs to the PlsX family.</text>
</comment>